<proteinExistence type="inferred from homology"/>
<sequence length="357" mass="38431">MAKKPSLSPEEMRREALETALSTIERKYGLGAVMKLSDEAHVAIPVIPTGSIGLDLALGVGGVPRGRVTEIYGPESSGKTTLTLHIIAEAQKRGGTAAFIDAEHALDVAYARRLGVNTEELLISQPDFGEQALDIADMLVRSAAVDLVVIDSVAALIPQAELEGSMGDTQVGGQARLMSHALRKLTGTIHKSRTAVIFINQIRMKIGTMGYGSPETTTGGNALKFYSSVRMDIRKIQTLKDKEEVYGSRTRVKIVKNKVAPPFREALFDILYGTGISRTGEIIDLGSDAGIIDKSGSWFAFGSERLGQGKENVRALLEENAPLREAIEAKLIEHLGMTPTKFASSGEEPANDEENDL</sequence>
<protein>
    <recommendedName>
        <fullName evidence="1">Protein RecA</fullName>
    </recommendedName>
    <alternativeName>
        <fullName evidence="1">Recombinase A</fullName>
    </alternativeName>
</protein>
<keyword id="KW-0067">ATP-binding</keyword>
<keyword id="KW-0963">Cytoplasm</keyword>
<keyword id="KW-0227">DNA damage</keyword>
<keyword id="KW-0233">DNA recombination</keyword>
<keyword id="KW-0234">DNA repair</keyword>
<keyword id="KW-0238">DNA-binding</keyword>
<keyword id="KW-0547">Nucleotide-binding</keyword>
<keyword id="KW-1185">Reference proteome</keyword>
<keyword id="KW-0742">SOS response</keyword>
<gene>
    <name evidence="1" type="primary">recA</name>
    <name type="ordered locus">DVU_1090</name>
</gene>
<dbReference type="EMBL" id="AE017285">
    <property type="protein sequence ID" value="AAS95570.1"/>
    <property type="molecule type" value="Genomic_DNA"/>
</dbReference>
<dbReference type="RefSeq" id="WP_010938389.1">
    <property type="nucleotide sequence ID" value="NC_002937.3"/>
</dbReference>
<dbReference type="RefSeq" id="YP_010311.1">
    <property type="nucleotide sequence ID" value="NC_002937.3"/>
</dbReference>
<dbReference type="SMR" id="P62214"/>
<dbReference type="STRING" id="882.DVU_1090"/>
<dbReference type="PaxDb" id="882-DVU_1090"/>
<dbReference type="EnsemblBacteria" id="AAS95570">
    <property type="protein sequence ID" value="AAS95570"/>
    <property type="gene ID" value="DVU_1090"/>
</dbReference>
<dbReference type="KEGG" id="dvu:DVU_1090"/>
<dbReference type="PATRIC" id="fig|882.5.peg.1028"/>
<dbReference type="eggNOG" id="COG0468">
    <property type="taxonomic scope" value="Bacteria"/>
</dbReference>
<dbReference type="HOGENOM" id="CLU_040469_1_2_7"/>
<dbReference type="OrthoDB" id="9776733at2"/>
<dbReference type="PhylomeDB" id="P62214"/>
<dbReference type="Proteomes" id="UP000002194">
    <property type="component" value="Chromosome"/>
</dbReference>
<dbReference type="GO" id="GO:0005829">
    <property type="term" value="C:cytosol"/>
    <property type="evidence" value="ECO:0007669"/>
    <property type="project" value="TreeGrafter"/>
</dbReference>
<dbReference type="GO" id="GO:0005524">
    <property type="term" value="F:ATP binding"/>
    <property type="evidence" value="ECO:0007669"/>
    <property type="project" value="UniProtKB-UniRule"/>
</dbReference>
<dbReference type="GO" id="GO:0016887">
    <property type="term" value="F:ATP hydrolysis activity"/>
    <property type="evidence" value="ECO:0007669"/>
    <property type="project" value="InterPro"/>
</dbReference>
<dbReference type="GO" id="GO:0140664">
    <property type="term" value="F:ATP-dependent DNA damage sensor activity"/>
    <property type="evidence" value="ECO:0007669"/>
    <property type="project" value="InterPro"/>
</dbReference>
<dbReference type="GO" id="GO:0003684">
    <property type="term" value="F:damaged DNA binding"/>
    <property type="evidence" value="ECO:0007669"/>
    <property type="project" value="UniProtKB-UniRule"/>
</dbReference>
<dbReference type="GO" id="GO:0003697">
    <property type="term" value="F:single-stranded DNA binding"/>
    <property type="evidence" value="ECO:0007669"/>
    <property type="project" value="UniProtKB-UniRule"/>
</dbReference>
<dbReference type="GO" id="GO:0006310">
    <property type="term" value="P:DNA recombination"/>
    <property type="evidence" value="ECO:0007669"/>
    <property type="project" value="UniProtKB-UniRule"/>
</dbReference>
<dbReference type="GO" id="GO:0006281">
    <property type="term" value="P:DNA repair"/>
    <property type="evidence" value="ECO:0007669"/>
    <property type="project" value="UniProtKB-UniRule"/>
</dbReference>
<dbReference type="GO" id="GO:0009432">
    <property type="term" value="P:SOS response"/>
    <property type="evidence" value="ECO:0007669"/>
    <property type="project" value="UniProtKB-UniRule"/>
</dbReference>
<dbReference type="CDD" id="cd00983">
    <property type="entry name" value="RecA"/>
    <property type="match status" value="1"/>
</dbReference>
<dbReference type="FunFam" id="3.40.50.300:FF:000087">
    <property type="entry name" value="Recombinase RecA"/>
    <property type="match status" value="1"/>
</dbReference>
<dbReference type="Gene3D" id="3.40.50.300">
    <property type="entry name" value="P-loop containing nucleotide triphosphate hydrolases"/>
    <property type="match status" value="1"/>
</dbReference>
<dbReference type="HAMAP" id="MF_00268">
    <property type="entry name" value="RecA"/>
    <property type="match status" value="1"/>
</dbReference>
<dbReference type="InterPro" id="IPR003593">
    <property type="entry name" value="AAA+_ATPase"/>
</dbReference>
<dbReference type="InterPro" id="IPR013765">
    <property type="entry name" value="DNA_recomb/repair_RecA"/>
</dbReference>
<dbReference type="InterPro" id="IPR020584">
    <property type="entry name" value="DNA_recomb/repair_RecA_CS"/>
</dbReference>
<dbReference type="InterPro" id="IPR027417">
    <property type="entry name" value="P-loop_NTPase"/>
</dbReference>
<dbReference type="InterPro" id="IPR049261">
    <property type="entry name" value="RecA-like_C"/>
</dbReference>
<dbReference type="InterPro" id="IPR049428">
    <property type="entry name" value="RecA-like_N"/>
</dbReference>
<dbReference type="InterPro" id="IPR020588">
    <property type="entry name" value="RecA_ATP-bd"/>
</dbReference>
<dbReference type="InterPro" id="IPR023400">
    <property type="entry name" value="RecA_C_sf"/>
</dbReference>
<dbReference type="InterPro" id="IPR020587">
    <property type="entry name" value="RecA_monomer-monomer_interface"/>
</dbReference>
<dbReference type="NCBIfam" id="TIGR02012">
    <property type="entry name" value="tigrfam_recA"/>
    <property type="match status" value="1"/>
</dbReference>
<dbReference type="PANTHER" id="PTHR45900:SF1">
    <property type="entry name" value="MITOCHONDRIAL DNA REPAIR PROTEIN RECA HOMOLOG-RELATED"/>
    <property type="match status" value="1"/>
</dbReference>
<dbReference type="PANTHER" id="PTHR45900">
    <property type="entry name" value="RECA"/>
    <property type="match status" value="1"/>
</dbReference>
<dbReference type="Pfam" id="PF00154">
    <property type="entry name" value="RecA"/>
    <property type="match status" value="1"/>
</dbReference>
<dbReference type="Pfam" id="PF21096">
    <property type="entry name" value="RecA_C"/>
    <property type="match status" value="1"/>
</dbReference>
<dbReference type="PRINTS" id="PR00142">
    <property type="entry name" value="RECA"/>
</dbReference>
<dbReference type="SMART" id="SM00382">
    <property type="entry name" value="AAA"/>
    <property type="match status" value="1"/>
</dbReference>
<dbReference type="SUPFAM" id="SSF52540">
    <property type="entry name" value="P-loop containing nucleoside triphosphate hydrolases"/>
    <property type="match status" value="1"/>
</dbReference>
<dbReference type="SUPFAM" id="SSF54752">
    <property type="entry name" value="RecA protein, C-terminal domain"/>
    <property type="match status" value="1"/>
</dbReference>
<dbReference type="PROSITE" id="PS00321">
    <property type="entry name" value="RECA_1"/>
    <property type="match status" value="1"/>
</dbReference>
<dbReference type="PROSITE" id="PS50162">
    <property type="entry name" value="RECA_2"/>
    <property type="match status" value="1"/>
</dbReference>
<dbReference type="PROSITE" id="PS50163">
    <property type="entry name" value="RECA_3"/>
    <property type="match status" value="1"/>
</dbReference>
<feature type="chain" id="PRO_0000122702" description="Protein RecA">
    <location>
        <begin position="1"/>
        <end position="357"/>
    </location>
</feature>
<feature type="binding site" evidence="1">
    <location>
        <begin position="73"/>
        <end position="80"/>
    </location>
    <ligand>
        <name>ATP</name>
        <dbReference type="ChEBI" id="CHEBI:30616"/>
    </ligand>
</feature>
<reference key="1">
    <citation type="journal article" date="2004" name="Nat. Biotechnol.">
        <title>The genome sequence of the anaerobic, sulfate-reducing bacterium Desulfovibrio vulgaris Hildenborough.</title>
        <authorList>
            <person name="Heidelberg J.F."/>
            <person name="Seshadri R."/>
            <person name="Haveman S.A."/>
            <person name="Hemme C.L."/>
            <person name="Paulsen I.T."/>
            <person name="Kolonay J.F."/>
            <person name="Eisen J.A."/>
            <person name="Ward N.L."/>
            <person name="Methe B.A."/>
            <person name="Brinkac L.M."/>
            <person name="Daugherty S.C."/>
            <person name="DeBoy R.T."/>
            <person name="Dodson R.J."/>
            <person name="Durkin A.S."/>
            <person name="Madupu R."/>
            <person name="Nelson W.C."/>
            <person name="Sullivan S.A."/>
            <person name="Fouts D.E."/>
            <person name="Haft D.H."/>
            <person name="Selengut J."/>
            <person name="Peterson J.D."/>
            <person name="Davidsen T.M."/>
            <person name="Zafar N."/>
            <person name="Zhou L."/>
            <person name="Radune D."/>
            <person name="Dimitrov G."/>
            <person name="Hance M."/>
            <person name="Tran K."/>
            <person name="Khouri H.M."/>
            <person name="Gill J."/>
            <person name="Utterback T.R."/>
            <person name="Feldblyum T.V."/>
            <person name="Wall J.D."/>
            <person name="Voordouw G."/>
            <person name="Fraser C.M."/>
        </authorList>
    </citation>
    <scope>NUCLEOTIDE SEQUENCE [LARGE SCALE GENOMIC DNA]</scope>
    <source>
        <strain>ATCC 29579 / DSM 644 / CCUG 34227 / NCIMB 8303 / VKM B-1760 / Hildenborough</strain>
    </source>
</reference>
<accession>P62214</accession>
<comment type="function">
    <text evidence="1">Can catalyze the hydrolysis of ATP in the presence of single-stranded DNA, the ATP-dependent uptake of single-stranded DNA by duplex DNA, and the ATP-dependent hybridization of homologous single-stranded DNAs. It interacts with LexA causing its activation and leading to its autocatalytic cleavage.</text>
</comment>
<comment type="subcellular location">
    <subcellularLocation>
        <location evidence="1">Cytoplasm</location>
    </subcellularLocation>
</comment>
<comment type="similarity">
    <text evidence="1">Belongs to the RecA family.</text>
</comment>
<organism>
    <name type="scientific">Nitratidesulfovibrio vulgaris (strain ATCC 29579 / DSM 644 / CCUG 34227 / NCIMB 8303 / VKM B-1760 / Hildenborough)</name>
    <name type="common">Desulfovibrio vulgaris</name>
    <dbReference type="NCBI Taxonomy" id="882"/>
    <lineage>
        <taxon>Bacteria</taxon>
        <taxon>Pseudomonadati</taxon>
        <taxon>Thermodesulfobacteriota</taxon>
        <taxon>Desulfovibrionia</taxon>
        <taxon>Desulfovibrionales</taxon>
        <taxon>Desulfovibrionaceae</taxon>
        <taxon>Nitratidesulfovibrio</taxon>
    </lineage>
</organism>
<evidence type="ECO:0000255" key="1">
    <source>
        <dbReference type="HAMAP-Rule" id="MF_00268"/>
    </source>
</evidence>
<name>RECA_NITV2</name>